<comment type="function">
    <text evidence="1">One of two assembly initiator proteins, it binds directly to the 5'-end of the 23S rRNA, where it nucleates assembly of the 50S subunit.</text>
</comment>
<comment type="function">
    <text evidence="1">One of the proteins that surrounds the polypeptide exit tunnel on the outside of the subunit.</text>
</comment>
<comment type="subunit">
    <text evidence="1">Part of the 50S ribosomal subunit.</text>
</comment>
<comment type="similarity">
    <text evidence="1">Belongs to the universal ribosomal protein uL24 family.</text>
</comment>
<keyword id="KW-0687">Ribonucleoprotein</keyword>
<keyword id="KW-0689">Ribosomal protein</keyword>
<keyword id="KW-0694">RNA-binding</keyword>
<keyword id="KW-0699">rRNA-binding</keyword>
<dbReference type="EMBL" id="AM884177">
    <property type="protein sequence ID" value="CAP07171.1"/>
    <property type="molecule type" value="Genomic_DNA"/>
</dbReference>
<dbReference type="RefSeq" id="WP_009872719.1">
    <property type="nucleotide sequence ID" value="NC_010280.2"/>
</dbReference>
<dbReference type="SMR" id="B0BCF6"/>
<dbReference type="GeneID" id="1246171"/>
<dbReference type="KEGG" id="ctl:CTLon_0774"/>
<dbReference type="HOGENOM" id="CLU_093315_2_0_0"/>
<dbReference type="Proteomes" id="UP001154401">
    <property type="component" value="Chromosome"/>
</dbReference>
<dbReference type="GO" id="GO:1990904">
    <property type="term" value="C:ribonucleoprotein complex"/>
    <property type="evidence" value="ECO:0007669"/>
    <property type="project" value="UniProtKB-KW"/>
</dbReference>
<dbReference type="GO" id="GO:0005840">
    <property type="term" value="C:ribosome"/>
    <property type="evidence" value="ECO:0007669"/>
    <property type="project" value="UniProtKB-KW"/>
</dbReference>
<dbReference type="GO" id="GO:0019843">
    <property type="term" value="F:rRNA binding"/>
    <property type="evidence" value="ECO:0007669"/>
    <property type="project" value="UniProtKB-UniRule"/>
</dbReference>
<dbReference type="GO" id="GO:0003735">
    <property type="term" value="F:structural constituent of ribosome"/>
    <property type="evidence" value="ECO:0007669"/>
    <property type="project" value="InterPro"/>
</dbReference>
<dbReference type="GO" id="GO:0006412">
    <property type="term" value="P:translation"/>
    <property type="evidence" value="ECO:0007669"/>
    <property type="project" value="UniProtKB-UniRule"/>
</dbReference>
<dbReference type="CDD" id="cd06089">
    <property type="entry name" value="KOW_RPL26"/>
    <property type="match status" value="1"/>
</dbReference>
<dbReference type="Gene3D" id="2.30.30.30">
    <property type="match status" value="1"/>
</dbReference>
<dbReference type="HAMAP" id="MF_01326_B">
    <property type="entry name" value="Ribosomal_uL24_B"/>
    <property type="match status" value="1"/>
</dbReference>
<dbReference type="InterPro" id="IPR005824">
    <property type="entry name" value="KOW"/>
</dbReference>
<dbReference type="InterPro" id="IPR014722">
    <property type="entry name" value="Rib_uL2_dom2"/>
</dbReference>
<dbReference type="InterPro" id="IPR003256">
    <property type="entry name" value="Ribosomal_uL24"/>
</dbReference>
<dbReference type="InterPro" id="IPR005825">
    <property type="entry name" value="Ribosomal_uL24_CS"/>
</dbReference>
<dbReference type="InterPro" id="IPR041988">
    <property type="entry name" value="Ribosomal_uL24_KOW"/>
</dbReference>
<dbReference type="InterPro" id="IPR008991">
    <property type="entry name" value="Translation_prot_SH3-like_sf"/>
</dbReference>
<dbReference type="NCBIfam" id="TIGR01079">
    <property type="entry name" value="rplX_bact"/>
    <property type="match status" value="1"/>
</dbReference>
<dbReference type="PANTHER" id="PTHR12903">
    <property type="entry name" value="MITOCHONDRIAL RIBOSOMAL PROTEIN L24"/>
    <property type="match status" value="1"/>
</dbReference>
<dbReference type="Pfam" id="PF00467">
    <property type="entry name" value="KOW"/>
    <property type="match status" value="1"/>
</dbReference>
<dbReference type="Pfam" id="PF17136">
    <property type="entry name" value="ribosomal_L24"/>
    <property type="match status" value="1"/>
</dbReference>
<dbReference type="SMART" id="SM00739">
    <property type="entry name" value="KOW"/>
    <property type="match status" value="1"/>
</dbReference>
<dbReference type="SUPFAM" id="SSF50104">
    <property type="entry name" value="Translation proteins SH3-like domain"/>
    <property type="match status" value="1"/>
</dbReference>
<dbReference type="PROSITE" id="PS01108">
    <property type="entry name" value="RIBOSOMAL_L24"/>
    <property type="match status" value="1"/>
</dbReference>
<gene>
    <name evidence="1" type="primary">rplX</name>
    <name type="ordered locus">CTLon_0774</name>
</gene>
<reference key="1">
    <citation type="journal article" date="2008" name="Genome Res.">
        <title>Chlamydia trachomatis: genome sequence analysis of lymphogranuloma venereum isolates.</title>
        <authorList>
            <person name="Thomson N.R."/>
            <person name="Holden M.T.G."/>
            <person name="Carder C."/>
            <person name="Lennard N."/>
            <person name="Lockey S.J."/>
            <person name="Marsh P."/>
            <person name="Skipp P."/>
            <person name="O'Connor C.D."/>
            <person name="Goodhead I."/>
            <person name="Norbertzcak H."/>
            <person name="Harris B."/>
            <person name="Ormond D."/>
            <person name="Rance R."/>
            <person name="Quail M.A."/>
            <person name="Parkhill J."/>
            <person name="Stephens R.S."/>
            <person name="Clarke I.N."/>
        </authorList>
    </citation>
    <scope>NUCLEOTIDE SEQUENCE [LARGE SCALE GENOMIC DNA]</scope>
    <source>
        <strain>UCH-1/proctitis</strain>
    </source>
</reference>
<name>RL24_CHLTB</name>
<evidence type="ECO:0000255" key="1">
    <source>
        <dbReference type="HAMAP-Rule" id="MF_01326"/>
    </source>
</evidence>
<evidence type="ECO:0000305" key="2"/>
<accession>B0BCF6</accession>
<protein>
    <recommendedName>
        <fullName evidence="1">Large ribosomal subunit protein uL24</fullName>
    </recommendedName>
    <alternativeName>
        <fullName evidence="2">50S ribosomal protein L24</fullName>
    </alternativeName>
</protein>
<sequence length="111" mass="12608">MKRRSVCVGDTVYVLAGNDKGKQGKVLRCLKDKVVVEGINVRVKNIKRSQENPKGKRINIEAPLHISNVRLSIDNQPARLFVKVTEKGRELWNKHSDGSSSLYRLVRERKG</sequence>
<feature type="chain" id="PRO_1000141982" description="Large ribosomal subunit protein uL24">
    <location>
        <begin position="1"/>
        <end position="111"/>
    </location>
</feature>
<proteinExistence type="inferred from homology"/>
<organism>
    <name type="scientific">Chlamydia trachomatis serovar L2b (strain UCH-1/proctitis)</name>
    <dbReference type="NCBI Taxonomy" id="471473"/>
    <lineage>
        <taxon>Bacteria</taxon>
        <taxon>Pseudomonadati</taxon>
        <taxon>Chlamydiota</taxon>
        <taxon>Chlamydiia</taxon>
        <taxon>Chlamydiales</taxon>
        <taxon>Chlamydiaceae</taxon>
        <taxon>Chlamydia/Chlamydophila group</taxon>
        <taxon>Chlamydia</taxon>
    </lineage>
</organism>